<accession>P57723</accession>
<accession>Q96AH7</accession>
<dbReference type="EMBL" id="AF176330">
    <property type="protein sequence ID" value="AAG09241.1"/>
    <property type="molecule type" value="mRNA"/>
</dbReference>
<dbReference type="EMBL" id="AK023993">
    <property type="protein sequence ID" value="BAB14761.1"/>
    <property type="molecule type" value="mRNA"/>
</dbReference>
<dbReference type="EMBL" id="BC003008">
    <property type="protein sequence ID" value="AAH03008.1"/>
    <property type="molecule type" value="mRNA"/>
</dbReference>
<dbReference type="EMBL" id="BC004153">
    <property type="protein sequence ID" value="AAH04153.1"/>
    <property type="molecule type" value="mRNA"/>
</dbReference>
<dbReference type="EMBL" id="BC017098">
    <property type="protein sequence ID" value="AAH17098.1"/>
    <property type="molecule type" value="mRNA"/>
</dbReference>
<dbReference type="CCDS" id="CCDS2839.1">
    <molecule id="P57723-1"/>
</dbReference>
<dbReference type="CCDS" id="CCDS2840.2">
    <molecule id="P57723-2"/>
</dbReference>
<dbReference type="RefSeq" id="NP_001167571.1">
    <molecule id="P57723-1"/>
    <property type="nucleotide sequence ID" value="NM_001174100.2"/>
</dbReference>
<dbReference type="RefSeq" id="NP_065151.2">
    <molecule id="P57723-2"/>
    <property type="nucleotide sequence ID" value="NM_020418.4"/>
</dbReference>
<dbReference type="RefSeq" id="NP_127501.1">
    <molecule id="P57723-1"/>
    <property type="nucleotide sequence ID" value="NM_033008.3"/>
</dbReference>
<dbReference type="RefSeq" id="NP_127503.1">
    <molecule id="P57723-1"/>
    <property type="nucleotide sequence ID" value="NM_033010.2"/>
</dbReference>
<dbReference type="RefSeq" id="XP_005265388.1">
    <molecule id="P57723-1"/>
    <property type="nucleotide sequence ID" value="XM_005265331.4"/>
</dbReference>
<dbReference type="RefSeq" id="XP_006713331.1">
    <property type="nucleotide sequence ID" value="XM_006713268.2"/>
</dbReference>
<dbReference type="RefSeq" id="XP_006713332.1">
    <molecule id="P57723-1"/>
    <property type="nucleotide sequence ID" value="XM_006713269.2"/>
</dbReference>
<dbReference type="RefSeq" id="XP_006713333.1">
    <property type="nucleotide sequence ID" value="XM_006713270.1"/>
</dbReference>
<dbReference type="RefSeq" id="XP_047304573.1">
    <molecule id="P57723-1"/>
    <property type="nucleotide sequence ID" value="XM_047448617.1"/>
</dbReference>
<dbReference type="RefSeq" id="XP_047304574.1">
    <molecule id="P57723-1"/>
    <property type="nucleotide sequence ID" value="XM_047448618.1"/>
</dbReference>
<dbReference type="RefSeq" id="XP_047304578.1">
    <molecule id="P57723-1"/>
    <property type="nucleotide sequence ID" value="XM_047448622.1"/>
</dbReference>
<dbReference type="RefSeq" id="XP_054203312.1">
    <molecule id="P57723-1"/>
    <property type="nucleotide sequence ID" value="XM_054347337.1"/>
</dbReference>
<dbReference type="RefSeq" id="XP_054203313.1">
    <molecule id="P57723-1"/>
    <property type="nucleotide sequence ID" value="XM_054347338.1"/>
</dbReference>
<dbReference type="RefSeq" id="XP_054203314.1">
    <molecule id="P57723-1"/>
    <property type="nucleotide sequence ID" value="XM_054347339.1"/>
</dbReference>
<dbReference type="RefSeq" id="XP_054203315.1">
    <molecule id="P57723-1"/>
    <property type="nucleotide sequence ID" value="XM_054347340.1"/>
</dbReference>
<dbReference type="RefSeq" id="XP_054203319.1">
    <molecule id="P57723-1"/>
    <property type="nucleotide sequence ID" value="XM_054347344.1"/>
</dbReference>
<dbReference type="EMDB" id="EMD-21133"/>
<dbReference type="SMR" id="P57723"/>
<dbReference type="BioGRID" id="121351">
    <property type="interactions" value="51"/>
</dbReference>
<dbReference type="FunCoup" id="P57723">
    <property type="interactions" value="1741"/>
</dbReference>
<dbReference type="IntAct" id="P57723">
    <property type="interactions" value="33"/>
</dbReference>
<dbReference type="STRING" id="9606.ENSP00000417196"/>
<dbReference type="GlyGen" id="P57723">
    <property type="glycosylation" value="4 sites, 1 O-linked glycan (1 site)"/>
</dbReference>
<dbReference type="iPTMnet" id="P57723"/>
<dbReference type="PhosphoSitePlus" id="P57723"/>
<dbReference type="BioMuta" id="PCBP4"/>
<dbReference type="DMDM" id="12230429"/>
<dbReference type="jPOST" id="P57723"/>
<dbReference type="MassIVE" id="P57723"/>
<dbReference type="PaxDb" id="9606-ENSP00000417196"/>
<dbReference type="PeptideAtlas" id="P57723"/>
<dbReference type="ProteomicsDB" id="57014">
    <molecule id="P57723-1"/>
</dbReference>
<dbReference type="ProteomicsDB" id="57015">
    <molecule id="P57723-2"/>
</dbReference>
<dbReference type="Pumba" id="P57723"/>
<dbReference type="Antibodypedia" id="14226">
    <property type="antibodies" value="177 antibodies from 29 providers"/>
</dbReference>
<dbReference type="DNASU" id="57060"/>
<dbReference type="Ensembl" id="ENST00000322099.11">
    <molecule id="P57723-1"/>
    <property type="protein sequence ID" value="ENSP00000322341.7"/>
    <property type="gene ID" value="ENSG00000090097.22"/>
</dbReference>
<dbReference type="Ensembl" id="ENST00000355852.6">
    <molecule id="P57723-1"/>
    <property type="protein sequence ID" value="ENSP00000348111.2"/>
    <property type="gene ID" value="ENSG00000090097.22"/>
</dbReference>
<dbReference type="Ensembl" id="ENST00000428823.6">
    <molecule id="P57723-2"/>
    <property type="protein sequence ID" value="ENSP00000395030.2"/>
    <property type="gene ID" value="ENSG00000090097.22"/>
</dbReference>
<dbReference type="Ensembl" id="ENST00000461554.6">
    <molecule id="P57723-1"/>
    <property type="protein sequence ID" value="ENSP00000417196.1"/>
    <property type="gene ID" value="ENSG00000090097.22"/>
</dbReference>
<dbReference type="Ensembl" id="ENST00000484633.5">
    <molecule id="P57723-2"/>
    <property type="protein sequence ID" value="ENSP00000417100.1"/>
    <property type="gene ID" value="ENSG00000090097.22"/>
</dbReference>
<dbReference type="GeneID" id="57060"/>
<dbReference type="KEGG" id="hsa:57060"/>
<dbReference type="MANE-Select" id="ENST00000461554.6">
    <property type="protein sequence ID" value="ENSP00000417196.1"/>
    <property type="RefSeq nucleotide sequence ID" value="NM_001174100.2"/>
    <property type="RefSeq protein sequence ID" value="NP_001167571.1"/>
</dbReference>
<dbReference type="UCSC" id="uc003dcf.3">
    <molecule id="P57723-1"/>
    <property type="organism name" value="human"/>
</dbReference>
<dbReference type="AGR" id="HGNC:8652"/>
<dbReference type="CTD" id="57060"/>
<dbReference type="DisGeNET" id="57060"/>
<dbReference type="GeneCards" id="PCBP4"/>
<dbReference type="HGNC" id="HGNC:8652">
    <property type="gene designation" value="PCBP4"/>
</dbReference>
<dbReference type="HPA" id="ENSG00000090097">
    <property type="expression patterns" value="Tissue enhanced (brain, retina)"/>
</dbReference>
<dbReference type="MIM" id="608503">
    <property type="type" value="gene"/>
</dbReference>
<dbReference type="neXtProt" id="NX_P57723"/>
<dbReference type="OpenTargets" id="ENSG00000090097"/>
<dbReference type="PharmGKB" id="PA32991"/>
<dbReference type="VEuPathDB" id="HostDB:ENSG00000090097"/>
<dbReference type="eggNOG" id="KOG2190">
    <property type="taxonomic scope" value="Eukaryota"/>
</dbReference>
<dbReference type="GeneTree" id="ENSGT00940000159711"/>
<dbReference type="HOGENOM" id="CLU_022670_0_0_1"/>
<dbReference type="InParanoid" id="P57723"/>
<dbReference type="OMA" id="GKAGHRI"/>
<dbReference type="OrthoDB" id="442947at2759"/>
<dbReference type="PAN-GO" id="P57723">
    <property type="GO annotations" value="4 GO annotations based on evolutionary models"/>
</dbReference>
<dbReference type="PhylomeDB" id="P57723"/>
<dbReference type="TreeFam" id="TF318292"/>
<dbReference type="PathwayCommons" id="P57723"/>
<dbReference type="Reactome" id="R-HSA-6804116">
    <property type="pathway name" value="TP53 Regulates Transcription of Genes Involved in G1 Cell Cycle Arrest"/>
</dbReference>
<dbReference type="Reactome" id="R-HSA-69895">
    <property type="pathway name" value="Transcriptional activation of cell cycle inhibitor p21"/>
</dbReference>
<dbReference type="Reactome" id="R-HSA-9617828">
    <property type="pathway name" value="FOXO-mediated transcription of cell cycle genes"/>
</dbReference>
<dbReference type="SignaLink" id="P57723"/>
<dbReference type="BioGRID-ORCS" id="57060">
    <property type="hits" value="18 hits in 1158 CRISPR screens"/>
</dbReference>
<dbReference type="CD-CODE" id="DEE660B4">
    <property type="entry name" value="Stress granule"/>
</dbReference>
<dbReference type="ChiTaRS" id="PCBP4">
    <property type="organism name" value="human"/>
</dbReference>
<dbReference type="GeneWiki" id="PCBP4"/>
<dbReference type="GenomeRNAi" id="57060"/>
<dbReference type="Pharos" id="P57723">
    <property type="development level" value="Tbio"/>
</dbReference>
<dbReference type="PRO" id="PR:P57723"/>
<dbReference type="Proteomes" id="UP000005640">
    <property type="component" value="Chromosome 3"/>
</dbReference>
<dbReference type="RNAct" id="P57723">
    <property type="molecule type" value="protein"/>
</dbReference>
<dbReference type="Bgee" id="ENSG00000090097">
    <property type="expression patterns" value="Expressed in right hemisphere of cerebellum and 195 other cell types or tissues"/>
</dbReference>
<dbReference type="ExpressionAtlas" id="P57723">
    <property type="expression patterns" value="baseline and differential"/>
</dbReference>
<dbReference type="GO" id="GO:0005737">
    <property type="term" value="C:cytoplasm"/>
    <property type="evidence" value="ECO:0000318"/>
    <property type="project" value="GO_Central"/>
</dbReference>
<dbReference type="GO" id="GO:0005829">
    <property type="term" value="C:cytosol"/>
    <property type="evidence" value="ECO:0000314"/>
    <property type="project" value="HPA"/>
</dbReference>
<dbReference type="GO" id="GO:0005634">
    <property type="term" value="C:nucleus"/>
    <property type="evidence" value="ECO:0000318"/>
    <property type="project" value="GO_Central"/>
</dbReference>
<dbReference type="GO" id="GO:1990904">
    <property type="term" value="C:ribonucleoprotein complex"/>
    <property type="evidence" value="ECO:0007669"/>
    <property type="project" value="UniProtKB-KW"/>
</dbReference>
<dbReference type="GO" id="GO:0003677">
    <property type="term" value="F:DNA binding"/>
    <property type="evidence" value="ECO:0007669"/>
    <property type="project" value="UniProtKB-KW"/>
</dbReference>
<dbReference type="GO" id="GO:0003730">
    <property type="term" value="F:mRNA 3'-UTR binding"/>
    <property type="evidence" value="ECO:0000314"/>
    <property type="project" value="MGI"/>
</dbReference>
<dbReference type="GO" id="GO:0003729">
    <property type="term" value="F:mRNA binding"/>
    <property type="evidence" value="ECO:0000318"/>
    <property type="project" value="GO_Central"/>
</dbReference>
<dbReference type="GO" id="GO:0003723">
    <property type="term" value="F:RNA binding"/>
    <property type="evidence" value="ECO:0007005"/>
    <property type="project" value="UniProtKB"/>
</dbReference>
<dbReference type="GO" id="GO:0048025">
    <property type="term" value="P:negative regulation of mRNA splicing, via spliceosome"/>
    <property type="evidence" value="ECO:0000318"/>
    <property type="project" value="GO_Central"/>
</dbReference>
<dbReference type="GO" id="GO:0043488">
    <property type="term" value="P:regulation of mRNA stability"/>
    <property type="evidence" value="ECO:0000314"/>
    <property type="project" value="MGI"/>
</dbReference>
<dbReference type="GO" id="GO:0006357">
    <property type="term" value="P:regulation of transcription by RNA polymerase II"/>
    <property type="evidence" value="ECO:0000318"/>
    <property type="project" value="GO_Central"/>
</dbReference>
<dbReference type="CDD" id="cd22517">
    <property type="entry name" value="KH-I_PCBP4_rpt1"/>
    <property type="match status" value="1"/>
</dbReference>
<dbReference type="CDD" id="cd22520">
    <property type="entry name" value="KH-I_PCBP4_rpt2"/>
    <property type="match status" value="1"/>
</dbReference>
<dbReference type="CDD" id="cd22523">
    <property type="entry name" value="KH-I_PCBP4_rpt3"/>
    <property type="match status" value="1"/>
</dbReference>
<dbReference type="FunFam" id="3.30.1370.10:FF:000002">
    <property type="entry name" value="poly(RC)-binding protein 2 isoform X1"/>
    <property type="match status" value="1"/>
</dbReference>
<dbReference type="FunFam" id="3.30.1370.10:FF:000005">
    <property type="entry name" value="poly(RC)-binding protein 2 isoform X1"/>
    <property type="match status" value="1"/>
</dbReference>
<dbReference type="FunFam" id="3.30.1370.10:FF:000058">
    <property type="entry name" value="poly(RC)-binding protein 4 isoform X1"/>
    <property type="match status" value="1"/>
</dbReference>
<dbReference type="Gene3D" id="3.30.1370.10">
    <property type="entry name" value="K Homology domain, type 1"/>
    <property type="match status" value="3"/>
</dbReference>
<dbReference type="InterPro" id="IPR004087">
    <property type="entry name" value="KH_dom"/>
</dbReference>
<dbReference type="InterPro" id="IPR004088">
    <property type="entry name" value="KH_dom_type_1"/>
</dbReference>
<dbReference type="InterPro" id="IPR036612">
    <property type="entry name" value="KH_dom_type_1_sf"/>
</dbReference>
<dbReference type="PANTHER" id="PTHR10288">
    <property type="entry name" value="KH DOMAIN CONTAINING RNA BINDING PROTEIN"/>
    <property type="match status" value="1"/>
</dbReference>
<dbReference type="Pfam" id="PF00013">
    <property type="entry name" value="KH_1"/>
    <property type="match status" value="3"/>
</dbReference>
<dbReference type="SMART" id="SM00322">
    <property type="entry name" value="KH"/>
    <property type="match status" value="3"/>
</dbReference>
<dbReference type="SUPFAM" id="SSF54791">
    <property type="entry name" value="Eukaryotic type KH-domain (KH-domain type I)"/>
    <property type="match status" value="3"/>
</dbReference>
<dbReference type="PROSITE" id="PS50084">
    <property type="entry name" value="KH_TYPE_1"/>
    <property type="match status" value="3"/>
</dbReference>
<name>PCBP4_HUMAN</name>
<comment type="function">
    <text evidence="1">Single-stranded nucleic acid binding protein that binds preferentially to oligo dC.</text>
</comment>
<comment type="interaction">
    <interactant intactId="EBI-947264">
        <id>P57723</id>
    </interactant>
    <interactant intactId="EBI-351896">
        <id>P11142</id>
        <label>HSPA8</label>
    </interactant>
    <organismsDiffer>false</organismsDiffer>
    <experiments>2</experiments>
</comment>
<comment type="subcellular location">
    <subcellularLocation>
        <location evidence="3">Cytoplasm</location>
    </subcellularLocation>
</comment>
<comment type="alternative products">
    <event type="alternative splicing"/>
    <isoform>
        <id>P57723-1</id>
        <name>1</name>
        <sequence type="displayed"/>
    </isoform>
    <isoform>
        <id>P57723-2</id>
        <name>2</name>
        <sequence type="described" ref="VSP_010016"/>
    </isoform>
</comment>
<gene>
    <name type="primary">PCBP4</name>
</gene>
<protein>
    <recommendedName>
        <fullName>Poly(rC)-binding protein 4</fullName>
    </recommendedName>
    <alternativeName>
        <fullName>Alpha-CP4</fullName>
    </alternativeName>
</protein>
<evidence type="ECO:0000250" key="1"/>
<evidence type="ECO:0000255" key="2">
    <source>
        <dbReference type="PROSITE-ProRule" id="PRU00117"/>
    </source>
</evidence>
<evidence type="ECO:0000269" key="3">
    <source>
    </source>
</evidence>
<evidence type="ECO:0000303" key="4">
    <source>
    </source>
</evidence>
<proteinExistence type="evidence at protein level"/>
<sequence length="403" mass="41482">MSGSDGGLEEEPELSITLTLRMLMHGKEVGSIIGKKGETVKRIREQSSARITISEGSCPERITTITGSTAAVFHAVSMIAFKLDEDLCAAPANGGNVSRPPVTLRLVIPASQCGSLIGKAGTKIKEIRETTGAQVQVAGDLLPNSTERAVTVSGVPDAIILCVRQICAVILESPPKGATIPYHPSLSLGTVLLSANQGFSVQGQYGAVTPAEVTKLQQLSSHAVPFATPSVVPGLDPGTQTSSQEFLVPNDLIGCVIGRQGSKISEIRQMSGAHIKIGNQAEGAGERHVTITGSPVSIALAQYLITACLETAKSTSGGTPSSAPADLPAPFSPPLTALPTAPPGLLGTPYAISLSNFIGLKPMPFLALPPASPGPPPGLAAYTAKMAAANGSKKAERQKFSPY</sequence>
<feature type="chain" id="PRO_0000050094" description="Poly(rC)-binding protein 4">
    <location>
        <begin position="1"/>
        <end position="403"/>
    </location>
</feature>
<feature type="domain" description="KH 1" evidence="2">
    <location>
        <begin position="17"/>
        <end position="67"/>
    </location>
</feature>
<feature type="domain" description="KH 2" evidence="2">
    <location>
        <begin position="101"/>
        <end position="154"/>
    </location>
</feature>
<feature type="domain" description="KH 3" evidence="2">
    <location>
        <begin position="241"/>
        <end position="293"/>
    </location>
</feature>
<feature type="splice variant" id="VSP_010016" description="In isoform 2." evidence="4">
    <location>
        <begin position="130"/>
        <end position="172"/>
    </location>
</feature>
<feature type="sequence variant" id="VAR_049681" description="In dbSNP:rs323872.">
    <original>G</original>
    <variation>S</variation>
    <location>
        <position position="198"/>
    </location>
</feature>
<organism>
    <name type="scientific">Homo sapiens</name>
    <name type="common">Human</name>
    <dbReference type="NCBI Taxonomy" id="9606"/>
    <lineage>
        <taxon>Eukaryota</taxon>
        <taxon>Metazoa</taxon>
        <taxon>Chordata</taxon>
        <taxon>Craniata</taxon>
        <taxon>Vertebrata</taxon>
        <taxon>Euteleostomi</taxon>
        <taxon>Mammalia</taxon>
        <taxon>Eutheria</taxon>
        <taxon>Euarchontoglires</taxon>
        <taxon>Primates</taxon>
        <taxon>Haplorrhini</taxon>
        <taxon>Catarrhini</taxon>
        <taxon>Hominidae</taxon>
        <taxon>Homo</taxon>
    </lineage>
</organism>
<reference key="1">
    <citation type="journal article" date="2000" name="Genomics">
        <title>Identification of two novel mammalian genes establishes a subfamily of KH-domain RNA-binding proteins.</title>
        <authorList>
            <person name="Makeyev A.V."/>
            <person name="Liebhaber S.A."/>
        </authorList>
    </citation>
    <scope>NUCLEOTIDE SEQUENCE [MRNA] (ISOFORM 1)</scope>
</reference>
<reference key="2">
    <citation type="journal article" date="2004" name="Nat. Genet.">
        <title>Complete sequencing and characterization of 21,243 full-length human cDNAs.</title>
        <authorList>
            <person name="Ota T."/>
            <person name="Suzuki Y."/>
            <person name="Nishikawa T."/>
            <person name="Otsuki T."/>
            <person name="Sugiyama T."/>
            <person name="Irie R."/>
            <person name="Wakamatsu A."/>
            <person name="Hayashi K."/>
            <person name="Sato H."/>
            <person name="Nagai K."/>
            <person name="Kimura K."/>
            <person name="Makita H."/>
            <person name="Sekine M."/>
            <person name="Obayashi M."/>
            <person name="Nishi T."/>
            <person name="Shibahara T."/>
            <person name="Tanaka T."/>
            <person name="Ishii S."/>
            <person name="Yamamoto J."/>
            <person name="Saito K."/>
            <person name="Kawai Y."/>
            <person name="Isono Y."/>
            <person name="Nakamura Y."/>
            <person name="Nagahari K."/>
            <person name="Murakami K."/>
            <person name="Yasuda T."/>
            <person name="Iwayanagi T."/>
            <person name="Wagatsuma M."/>
            <person name="Shiratori A."/>
            <person name="Sudo H."/>
            <person name="Hosoiri T."/>
            <person name="Kaku Y."/>
            <person name="Kodaira H."/>
            <person name="Kondo H."/>
            <person name="Sugawara M."/>
            <person name="Takahashi M."/>
            <person name="Kanda K."/>
            <person name="Yokoi T."/>
            <person name="Furuya T."/>
            <person name="Kikkawa E."/>
            <person name="Omura Y."/>
            <person name="Abe K."/>
            <person name="Kamihara K."/>
            <person name="Katsuta N."/>
            <person name="Sato K."/>
            <person name="Tanikawa M."/>
            <person name="Yamazaki M."/>
            <person name="Ninomiya K."/>
            <person name="Ishibashi T."/>
            <person name="Yamashita H."/>
            <person name="Murakawa K."/>
            <person name="Fujimori K."/>
            <person name="Tanai H."/>
            <person name="Kimata M."/>
            <person name="Watanabe M."/>
            <person name="Hiraoka S."/>
            <person name="Chiba Y."/>
            <person name="Ishida S."/>
            <person name="Ono Y."/>
            <person name="Takiguchi S."/>
            <person name="Watanabe S."/>
            <person name="Yosida M."/>
            <person name="Hotuta T."/>
            <person name="Kusano J."/>
            <person name="Kanehori K."/>
            <person name="Takahashi-Fujii A."/>
            <person name="Hara H."/>
            <person name="Tanase T.-O."/>
            <person name="Nomura Y."/>
            <person name="Togiya S."/>
            <person name="Komai F."/>
            <person name="Hara R."/>
            <person name="Takeuchi K."/>
            <person name="Arita M."/>
            <person name="Imose N."/>
            <person name="Musashino K."/>
            <person name="Yuuki H."/>
            <person name="Oshima A."/>
            <person name="Sasaki N."/>
            <person name="Aotsuka S."/>
            <person name="Yoshikawa Y."/>
            <person name="Matsunawa H."/>
            <person name="Ichihara T."/>
            <person name="Shiohata N."/>
            <person name="Sano S."/>
            <person name="Moriya S."/>
            <person name="Momiyama H."/>
            <person name="Satoh N."/>
            <person name="Takami S."/>
            <person name="Terashima Y."/>
            <person name="Suzuki O."/>
            <person name="Nakagawa S."/>
            <person name="Senoh A."/>
            <person name="Mizoguchi H."/>
            <person name="Goto Y."/>
            <person name="Shimizu F."/>
            <person name="Wakebe H."/>
            <person name="Hishigaki H."/>
            <person name="Watanabe T."/>
            <person name="Sugiyama A."/>
            <person name="Takemoto M."/>
            <person name="Kawakami B."/>
            <person name="Yamazaki M."/>
            <person name="Watanabe K."/>
            <person name="Kumagai A."/>
            <person name="Itakura S."/>
            <person name="Fukuzumi Y."/>
            <person name="Fujimori Y."/>
            <person name="Komiyama M."/>
            <person name="Tashiro H."/>
            <person name="Tanigami A."/>
            <person name="Fujiwara T."/>
            <person name="Ono T."/>
            <person name="Yamada K."/>
            <person name="Fujii Y."/>
            <person name="Ozaki K."/>
            <person name="Hirao M."/>
            <person name="Ohmori Y."/>
            <person name="Kawabata A."/>
            <person name="Hikiji T."/>
            <person name="Kobatake N."/>
            <person name="Inagaki H."/>
            <person name="Ikema Y."/>
            <person name="Okamoto S."/>
            <person name="Okitani R."/>
            <person name="Kawakami T."/>
            <person name="Noguchi S."/>
            <person name="Itoh T."/>
            <person name="Shigeta K."/>
            <person name="Senba T."/>
            <person name="Matsumura K."/>
            <person name="Nakajima Y."/>
            <person name="Mizuno T."/>
            <person name="Morinaga M."/>
            <person name="Sasaki M."/>
            <person name="Togashi T."/>
            <person name="Oyama M."/>
            <person name="Hata H."/>
            <person name="Watanabe M."/>
            <person name="Komatsu T."/>
            <person name="Mizushima-Sugano J."/>
            <person name="Satoh T."/>
            <person name="Shirai Y."/>
            <person name="Takahashi Y."/>
            <person name="Nakagawa K."/>
            <person name="Okumura K."/>
            <person name="Nagase T."/>
            <person name="Nomura N."/>
            <person name="Kikuchi H."/>
            <person name="Masuho Y."/>
            <person name="Yamashita R."/>
            <person name="Nakai K."/>
            <person name="Yada T."/>
            <person name="Nakamura Y."/>
            <person name="Ohara O."/>
            <person name="Isogai T."/>
            <person name="Sugano S."/>
        </authorList>
    </citation>
    <scope>NUCLEOTIDE SEQUENCE [LARGE SCALE MRNA] (ISOFORM 1)</scope>
</reference>
<reference key="3">
    <citation type="journal article" date="2004" name="Genome Res.">
        <title>The status, quality, and expansion of the NIH full-length cDNA project: the Mammalian Gene Collection (MGC).</title>
        <authorList>
            <consortium name="The MGC Project Team"/>
        </authorList>
    </citation>
    <scope>NUCLEOTIDE SEQUENCE [LARGE SCALE MRNA] (ISOFORMS 1 AND 2)</scope>
    <source>
        <tissue>Brain</tissue>
        <tissue>Lung</tissue>
    </source>
</reference>
<reference key="4">
    <citation type="journal article" date="2003" name="Mol. Cell. Biol.">
        <title>A novel set of nuclear localization signals determine distributions of the alphaCP RNA-binding proteins.</title>
        <authorList>
            <person name="Chkheidze A.N."/>
            <person name="Liebhaber S.A."/>
        </authorList>
    </citation>
    <scope>SUBCELLULAR LOCATION</scope>
</reference>
<keyword id="KW-0025">Alternative splicing</keyword>
<keyword id="KW-0963">Cytoplasm</keyword>
<keyword id="KW-0238">DNA-binding</keyword>
<keyword id="KW-1267">Proteomics identification</keyword>
<keyword id="KW-1185">Reference proteome</keyword>
<keyword id="KW-0677">Repeat</keyword>
<keyword id="KW-0687">Ribonucleoprotein</keyword>
<keyword id="KW-0694">RNA-binding</keyword>